<feature type="chain" id="PRO_1000142062" description="Large ribosomal subunit protein uL4">
    <location>
        <begin position="1"/>
        <end position="200"/>
    </location>
</feature>
<feature type="region of interest" description="Disordered" evidence="2">
    <location>
        <begin position="42"/>
        <end position="65"/>
    </location>
</feature>
<feature type="strand" evidence="4">
    <location>
        <begin position="2"/>
        <end position="4"/>
    </location>
</feature>
<feature type="strand" evidence="4">
    <location>
        <begin position="6"/>
        <end position="8"/>
    </location>
</feature>
<feature type="strand" evidence="4">
    <location>
        <begin position="10"/>
        <end position="12"/>
    </location>
</feature>
<feature type="helix" evidence="4">
    <location>
        <begin position="15"/>
        <end position="18"/>
    </location>
</feature>
<feature type="helix" evidence="4">
    <location>
        <begin position="24"/>
        <end position="37"/>
    </location>
</feature>
<feature type="turn" evidence="4">
    <location>
        <begin position="48"/>
        <end position="50"/>
    </location>
</feature>
<feature type="strand" evidence="4">
    <location>
        <begin position="61"/>
        <end position="66"/>
    </location>
</feature>
<feature type="helix" evidence="4">
    <location>
        <begin position="97"/>
        <end position="114"/>
    </location>
</feature>
<feature type="strand" evidence="4">
    <location>
        <begin position="117"/>
        <end position="121"/>
    </location>
</feature>
<feature type="strand" evidence="4">
    <location>
        <begin position="126"/>
        <end position="128"/>
    </location>
</feature>
<feature type="helix" evidence="4">
    <location>
        <begin position="130"/>
        <end position="139"/>
    </location>
</feature>
<feature type="strand" evidence="4">
    <location>
        <begin position="143"/>
        <end position="151"/>
    </location>
</feature>
<feature type="helix" evidence="4">
    <location>
        <begin position="154"/>
        <end position="161"/>
    </location>
</feature>
<feature type="strand" evidence="4">
    <location>
        <begin position="166"/>
        <end position="170"/>
    </location>
</feature>
<feature type="helix" evidence="4">
    <location>
        <begin position="171"/>
        <end position="173"/>
    </location>
</feature>
<feature type="helix" evidence="4">
    <location>
        <begin position="176"/>
        <end position="181"/>
    </location>
</feature>
<feature type="strand" evidence="4">
    <location>
        <begin position="185"/>
        <end position="188"/>
    </location>
</feature>
<feature type="helix" evidence="4">
    <location>
        <begin position="189"/>
        <end position="198"/>
    </location>
</feature>
<reference key="1">
    <citation type="journal article" date="2008" name="J. Bacteriol.">
        <title>Comparative genome sequence analysis of multidrug-resistant Acinetobacter baumannii.</title>
        <authorList>
            <person name="Adams M.D."/>
            <person name="Goglin K."/>
            <person name="Molyneaux N."/>
            <person name="Hujer K.M."/>
            <person name="Lavender H."/>
            <person name="Jamison J.J."/>
            <person name="MacDonald I.J."/>
            <person name="Martin K.M."/>
            <person name="Russo T."/>
            <person name="Campagnari A.A."/>
            <person name="Hujer A.M."/>
            <person name="Bonomo R.A."/>
            <person name="Gill S.R."/>
        </authorList>
    </citation>
    <scope>NUCLEOTIDE SEQUENCE [LARGE SCALE GENOMIC DNA]</scope>
    <source>
        <strain>AB0057</strain>
    </source>
</reference>
<name>RL4_ACIB5</name>
<keyword id="KW-0002">3D-structure</keyword>
<keyword id="KW-0687">Ribonucleoprotein</keyword>
<keyword id="KW-0689">Ribosomal protein</keyword>
<keyword id="KW-0694">RNA-binding</keyword>
<keyword id="KW-0699">rRNA-binding</keyword>
<dbReference type="EMBL" id="CP001182">
    <property type="protein sequence ID" value="ACJ42896.1"/>
    <property type="molecule type" value="Genomic_DNA"/>
</dbReference>
<dbReference type="RefSeq" id="WP_001050255.1">
    <property type="nucleotide sequence ID" value="NC_011586.2"/>
</dbReference>
<dbReference type="PDB" id="6V39">
    <property type="method" value="EM"/>
    <property type="resolution" value="3.04 A"/>
    <property type="chains" value="E=1-200"/>
</dbReference>
<dbReference type="PDB" id="6V3A">
    <property type="method" value="EM"/>
    <property type="resolution" value="2.82 A"/>
    <property type="chains" value="E=1-200"/>
</dbReference>
<dbReference type="PDB" id="6V3B">
    <property type="method" value="EM"/>
    <property type="resolution" value="2.91 A"/>
    <property type="chains" value="E=1-200"/>
</dbReference>
<dbReference type="PDB" id="6V3D">
    <property type="method" value="EM"/>
    <property type="resolution" value="2.95 A"/>
    <property type="chains" value="E=1-200"/>
</dbReference>
<dbReference type="PDB" id="7M4V">
    <property type="method" value="EM"/>
    <property type="resolution" value="2.54 A"/>
    <property type="chains" value="E=1-200"/>
</dbReference>
<dbReference type="PDB" id="7M4W">
    <property type="method" value="EM"/>
    <property type="resolution" value="2.55 A"/>
    <property type="chains" value="E=1-200"/>
</dbReference>
<dbReference type="PDB" id="7M4X">
    <property type="method" value="EM"/>
    <property type="resolution" value="2.66 A"/>
    <property type="chains" value="E=1-200"/>
</dbReference>
<dbReference type="PDB" id="7M4Y">
    <property type="method" value="EM"/>
    <property type="resolution" value="2.50 A"/>
    <property type="chains" value="E=1-200"/>
</dbReference>
<dbReference type="PDB" id="7M4Z">
    <property type="method" value="EM"/>
    <property type="resolution" value="2.92 A"/>
    <property type="chains" value="E=1-200"/>
</dbReference>
<dbReference type="PDB" id="7RYF">
    <property type="method" value="EM"/>
    <property type="resolution" value="2.65 A"/>
    <property type="chains" value="E=1-200"/>
</dbReference>
<dbReference type="PDB" id="7RYG">
    <property type="method" value="EM"/>
    <property type="resolution" value="2.38 A"/>
    <property type="chains" value="E=1-200"/>
</dbReference>
<dbReference type="PDB" id="7RYH">
    <property type="method" value="EM"/>
    <property type="resolution" value="2.43 A"/>
    <property type="chains" value="E=1-200"/>
</dbReference>
<dbReference type="PDB" id="7UVV">
    <property type="method" value="EM"/>
    <property type="resolution" value="2.50 A"/>
    <property type="chains" value="E=1-200"/>
</dbReference>
<dbReference type="PDB" id="7UVW">
    <property type="method" value="EM"/>
    <property type="resolution" value="2.37 A"/>
    <property type="chains" value="E=1-200"/>
</dbReference>
<dbReference type="PDB" id="7UVX">
    <property type="method" value="EM"/>
    <property type="resolution" value="2.35 A"/>
    <property type="chains" value="E=1-200"/>
</dbReference>
<dbReference type="PDB" id="7UVY">
    <property type="method" value="EM"/>
    <property type="resolution" value="2.39 A"/>
    <property type="chains" value="E=1-200"/>
</dbReference>
<dbReference type="PDB" id="7UVZ">
    <property type="method" value="EM"/>
    <property type="resolution" value="2.21 A"/>
    <property type="chains" value="E=1-200"/>
</dbReference>
<dbReference type="PDB" id="7UW1">
    <property type="method" value="EM"/>
    <property type="resolution" value="2.21 A"/>
    <property type="chains" value="E=1-200"/>
</dbReference>
<dbReference type="PDBsum" id="6V39"/>
<dbReference type="PDBsum" id="6V3A"/>
<dbReference type="PDBsum" id="6V3B"/>
<dbReference type="PDBsum" id="6V3D"/>
<dbReference type="PDBsum" id="7M4V"/>
<dbReference type="PDBsum" id="7M4W"/>
<dbReference type="PDBsum" id="7M4X"/>
<dbReference type="PDBsum" id="7M4Y"/>
<dbReference type="PDBsum" id="7M4Z"/>
<dbReference type="PDBsum" id="7RYF"/>
<dbReference type="PDBsum" id="7RYG"/>
<dbReference type="PDBsum" id="7RYH"/>
<dbReference type="PDBsum" id="7UVV"/>
<dbReference type="PDBsum" id="7UVW"/>
<dbReference type="PDBsum" id="7UVX"/>
<dbReference type="PDBsum" id="7UVY"/>
<dbReference type="PDBsum" id="7UVZ"/>
<dbReference type="PDBsum" id="7UW1"/>
<dbReference type="EMDB" id="EMD-21030"/>
<dbReference type="EMDB" id="EMD-21031"/>
<dbReference type="EMDB" id="EMD-21032"/>
<dbReference type="EMDB" id="EMD-21033"/>
<dbReference type="EMDB" id="EMD-23667"/>
<dbReference type="EMDB" id="EMD-23668"/>
<dbReference type="EMDB" id="EMD-23669"/>
<dbReference type="EMDB" id="EMD-23670"/>
<dbReference type="EMDB" id="EMD-23671"/>
<dbReference type="EMDB" id="EMD-24738"/>
<dbReference type="EMDB" id="EMD-24739"/>
<dbReference type="EMDB" id="EMD-24740"/>
<dbReference type="EMDB" id="EMD-26817"/>
<dbReference type="EMDB" id="EMD-26818"/>
<dbReference type="EMDB" id="EMD-26819"/>
<dbReference type="EMDB" id="EMD-26820"/>
<dbReference type="EMDB" id="EMD-26821"/>
<dbReference type="EMDB" id="EMD-26822"/>
<dbReference type="SMR" id="B7IA38"/>
<dbReference type="IntAct" id="B7IA38">
    <property type="interactions" value="2"/>
</dbReference>
<dbReference type="GeneID" id="92895316"/>
<dbReference type="KEGG" id="abn:AB57_3529"/>
<dbReference type="HOGENOM" id="CLU_041575_5_2_6"/>
<dbReference type="Proteomes" id="UP000007094">
    <property type="component" value="Chromosome"/>
</dbReference>
<dbReference type="GO" id="GO:1990904">
    <property type="term" value="C:ribonucleoprotein complex"/>
    <property type="evidence" value="ECO:0007669"/>
    <property type="project" value="UniProtKB-KW"/>
</dbReference>
<dbReference type="GO" id="GO:0005840">
    <property type="term" value="C:ribosome"/>
    <property type="evidence" value="ECO:0007669"/>
    <property type="project" value="UniProtKB-KW"/>
</dbReference>
<dbReference type="GO" id="GO:0019843">
    <property type="term" value="F:rRNA binding"/>
    <property type="evidence" value="ECO:0007669"/>
    <property type="project" value="UniProtKB-UniRule"/>
</dbReference>
<dbReference type="GO" id="GO:0003735">
    <property type="term" value="F:structural constituent of ribosome"/>
    <property type="evidence" value="ECO:0007669"/>
    <property type="project" value="InterPro"/>
</dbReference>
<dbReference type="GO" id="GO:0006412">
    <property type="term" value="P:translation"/>
    <property type="evidence" value="ECO:0007669"/>
    <property type="project" value="UniProtKB-UniRule"/>
</dbReference>
<dbReference type="Gene3D" id="3.40.1370.10">
    <property type="match status" value="1"/>
</dbReference>
<dbReference type="HAMAP" id="MF_01328_B">
    <property type="entry name" value="Ribosomal_uL4_B"/>
    <property type="match status" value="1"/>
</dbReference>
<dbReference type="InterPro" id="IPR002136">
    <property type="entry name" value="Ribosomal_uL4"/>
</dbReference>
<dbReference type="InterPro" id="IPR013005">
    <property type="entry name" value="Ribosomal_uL4-like"/>
</dbReference>
<dbReference type="InterPro" id="IPR023574">
    <property type="entry name" value="Ribosomal_uL4_dom_sf"/>
</dbReference>
<dbReference type="NCBIfam" id="TIGR03953">
    <property type="entry name" value="rplD_bact"/>
    <property type="match status" value="1"/>
</dbReference>
<dbReference type="PANTHER" id="PTHR10746">
    <property type="entry name" value="50S RIBOSOMAL PROTEIN L4"/>
    <property type="match status" value="1"/>
</dbReference>
<dbReference type="PANTHER" id="PTHR10746:SF6">
    <property type="entry name" value="LARGE RIBOSOMAL SUBUNIT PROTEIN UL4M"/>
    <property type="match status" value="1"/>
</dbReference>
<dbReference type="Pfam" id="PF00573">
    <property type="entry name" value="Ribosomal_L4"/>
    <property type="match status" value="1"/>
</dbReference>
<dbReference type="SUPFAM" id="SSF52166">
    <property type="entry name" value="Ribosomal protein L4"/>
    <property type="match status" value="1"/>
</dbReference>
<accession>B7IA38</accession>
<proteinExistence type="evidence at protein level"/>
<sequence>MNLKTVSGSAVELSEVAFGREFNEALVHQVVTAYLAGGRQGTRAHKSRADVSGGGKKPFRQKGTGRARAGSIRSPIWVGGGKTFAARPQDWSQKVNRKMYRGAMQCILAELVRQDRLVLVEEFAVAAPKTKELLAKLNDLNAARALIVTDAVDENLYLAARNLPHVDVVDATAIDPVSLIAFDKVVMSVAAAKKIEVELG</sequence>
<protein>
    <recommendedName>
        <fullName evidence="1">Large ribosomal subunit protein uL4</fullName>
    </recommendedName>
    <alternativeName>
        <fullName evidence="3">50S ribosomal protein L4</fullName>
    </alternativeName>
</protein>
<evidence type="ECO:0000255" key="1">
    <source>
        <dbReference type="HAMAP-Rule" id="MF_01328"/>
    </source>
</evidence>
<evidence type="ECO:0000256" key="2">
    <source>
        <dbReference type="SAM" id="MobiDB-lite"/>
    </source>
</evidence>
<evidence type="ECO:0000305" key="3"/>
<evidence type="ECO:0007829" key="4">
    <source>
        <dbReference type="PDB" id="7M4V"/>
    </source>
</evidence>
<comment type="function">
    <text evidence="1">One of the primary rRNA binding proteins, this protein initially binds near the 5'-end of the 23S rRNA. It is important during the early stages of 50S assembly. It makes multiple contacts with different domains of the 23S rRNA in the assembled 50S subunit and ribosome.</text>
</comment>
<comment type="function">
    <text evidence="1">Forms part of the polypeptide exit tunnel.</text>
</comment>
<comment type="subunit">
    <text evidence="1">Part of the 50S ribosomal subunit.</text>
</comment>
<comment type="similarity">
    <text evidence="1">Belongs to the universal ribosomal protein uL4 family.</text>
</comment>
<gene>
    <name evidence="1" type="primary">rplD</name>
    <name type="ordered locus">AB57_3529</name>
</gene>
<organism>
    <name type="scientific">Acinetobacter baumannii (strain AB0057)</name>
    <dbReference type="NCBI Taxonomy" id="480119"/>
    <lineage>
        <taxon>Bacteria</taxon>
        <taxon>Pseudomonadati</taxon>
        <taxon>Pseudomonadota</taxon>
        <taxon>Gammaproteobacteria</taxon>
        <taxon>Moraxellales</taxon>
        <taxon>Moraxellaceae</taxon>
        <taxon>Acinetobacter</taxon>
        <taxon>Acinetobacter calcoaceticus/baumannii complex</taxon>
    </lineage>
</organism>